<accession>P0ABN0</accession>
<accession>P33925</accession>
<evidence type="ECO:0000250" key="1"/>
<evidence type="ECO:0000255" key="2"/>
<evidence type="ECO:0000305" key="3"/>
<reference key="1">
    <citation type="journal article" date="2002" name="Nucleic Acids Res.">
        <title>Genome sequence of Shigella flexneri 2a: insights into pathogenicity through comparison with genomes of Escherichia coli K12 and O157.</title>
        <authorList>
            <person name="Jin Q."/>
            <person name="Yuan Z."/>
            <person name="Xu J."/>
            <person name="Wang Y."/>
            <person name="Shen Y."/>
            <person name="Lu W."/>
            <person name="Wang J."/>
            <person name="Liu H."/>
            <person name="Yang J."/>
            <person name="Yang F."/>
            <person name="Zhang X."/>
            <person name="Zhang J."/>
            <person name="Yang G."/>
            <person name="Wu H."/>
            <person name="Qu D."/>
            <person name="Dong J."/>
            <person name="Sun L."/>
            <person name="Xue Y."/>
            <person name="Zhao A."/>
            <person name="Gao Y."/>
            <person name="Zhu J."/>
            <person name="Kan B."/>
            <person name="Ding K."/>
            <person name="Chen S."/>
            <person name="Cheng H."/>
            <person name="Yao Z."/>
            <person name="He B."/>
            <person name="Chen R."/>
            <person name="Ma D."/>
            <person name="Qiang B."/>
            <person name="Wen Y."/>
            <person name="Hou Y."/>
            <person name="Yu J."/>
        </authorList>
    </citation>
    <scope>NUCLEOTIDE SEQUENCE [LARGE SCALE GENOMIC DNA]</scope>
    <source>
        <strain>301 / Serotype 2a</strain>
    </source>
</reference>
<reference key="2">
    <citation type="journal article" date="2003" name="Infect. Immun.">
        <title>Complete genome sequence and comparative genomics of Shigella flexneri serotype 2a strain 2457T.</title>
        <authorList>
            <person name="Wei J."/>
            <person name="Goldberg M.B."/>
            <person name="Burland V."/>
            <person name="Venkatesan M.M."/>
            <person name="Deng W."/>
            <person name="Fournier G."/>
            <person name="Mayhew G.F."/>
            <person name="Plunkett G. III"/>
            <person name="Rose D.J."/>
            <person name="Darling A."/>
            <person name="Mau B."/>
            <person name="Perna N.T."/>
            <person name="Payne S.M."/>
            <person name="Runyen-Janecky L.J."/>
            <person name="Zhou S."/>
            <person name="Schwartz D.C."/>
            <person name="Blattner F.R."/>
        </authorList>
    </citation>
    <scope>NUCLEOTIDE SEQUENCE [LARGE SCALE GENOMIC DNA]</scope>
    <source>
        <strain>ATCC 700930 / 2457T / Serotype 2a</strain>
    </source>
</reference>
<name>CCMH_SHIFL</name>
<comment type="function">
    <text evidence="1">May be required for the biogenesis of c-type cytochromes. Possible subunit of a heme lyase (By similarity).</text>
</comment>
<comment type="subcellular location">
    <subcellularLocation>
        <location evidence="1">Cell inner membrane</location>
        <topology evidence="1">Multi-pass membrane protein</topology>
    </subcellularLocation>
</comment>
<comment type="similarity">
    <text evidence="3">Belongs to the CcmH/CycL/Ccl2/NrfF family.</text>
</comment>
<feature type="signal peptide" evidence="2">
    <location>
        <begin position="1"/>
        <end position="18"/>
    </location>
</feature>
<feature type="chain" id="PRO_0000042812" description="Cytochrome c-type biogenesis protein CcmH">
    <location>
        <begin position="19"/>
        <end position="350"/>
    </location>
</feature>
<feature type="topological domain" description="Periplasmic" evidence="2">
    <location>
        <begin position="19"/>
        <end position="96"/>
    </location>
</feature>
<feature type="transmembrane region" description="Helical" evidence="2">
    <location>
        <begin position="97"/>
        <end position="119"/>
    </location>
</feature>
<feature type="topological domain" description="Cytoplasmic" evidence="2">
    <location>
        <begin position="120"/>
        <end position="146"/>
    </location>
</feature>
<feature type="transmembrane region" description="Helical" evidence="2">
    <location>
        <begin position="147"/>
        <end position="169"/>
    </location>
</feature>
<feature type="topological domain" description="Periplasmic" evidence="2">
    <location>
        <begin position="170"/>
        <end position="350"/>
    </location>
</feature>
<feature type="repeat" description="TPR 1">
    <location>
        <begin position="222"/>
        <end position="255"/>
    </location>
</feature>
<feature type="repeat" description="TPR 2">
    <location>
        <begin position="293"/>
        <end position="326"/>
    </location>
</feature>
<feature type="binding site" description="covalent" evidence="2">
    <location>
        <position position="43"/>
    </location>
    <ligand>
        <name>heme</name>
        <dbReference type="ChEBI" id="CHEBI:30413"/>
    </ligand>
</feature>
<feature type="binding site" description="covalent" evidence="2">
    <location>
        <position position="46"/>
    </location>
    <ligand>
        <name>heme</name>
        <dbReference type="ChEBI" id="CHEBI:30413"/>
    </ligand>
</feature>
<sequence>MRFLLGVLMLMISGSALATIDVLQFKDEAQEQQFRQLTEELRCPKCQNNSIADSNSMIATDLRQKVYELMQEGKSKKEIVDYMVARYGNFVTYDPPLTPLTVLLWVLPVVAIGIGGWVIYARSRRRVRVVPEAFPEQSVPEGKRAGYVVYLPGIVVALIVAGVSYYQTGNYQQVKIWQQATAQAPALLDRALDPKADPLNEEEMSRLALGMRTQLQKNPGDIEGWIMLGRVGMALGNASIATDAYATAYRLDPKNSDAALGYAEALTRSSDPNDNRLGGELLRQLVRTDHSNIRVLSMYAFNAFEQQRFGEAVAAWEMMLKLLPANDTRRAVIERSIAQAMQHLSPQESK</sequence>
<dbReference type="EMBL" id="AE005674">
    <property type="protein sequence ID" value="AAN43797.1"/>
    <property type="molecule type" value="Genomic_DNA"/>
</dbReference>
<dbReference type="EMBL" id="AE014073">
    <property type="protein sequence ID" value="AAP17614.1"/>
    <property type="molecule type" value="Genomic_DNA"/>
</dbReference>
<dbReference type="RefSeq" id="NP_708090.1">
    <property type="nucleotide sequence ID" value="NC_004337.2"/>
</dbReference>
<dbReference type="RefSeq" id="WP_001211575.1">
    <property type="nucleotide sequence ID" value="NZ_WPGW01000022.1"/>
</dbReference>
<dbReference type="BMRB" id="P0ABN0"/>
<dbReference type="SMR" id="P0ABN0"/>
<dbReference type="STRING" id="198214.SF2278"/>
<dbReference type="PaxDb" id="198214-SF2278"/>
<dbReference type="GeneID" id="1025443"/>
<dbReference type="GeneID" id="75172321"/>
<dbReference type="KEGG" id="sfl:SF2278"/>
<dbReference type="KEGG" id="sfx:S2408"/>
<dbReference type="PATRIC" id="fig|198214.7.peg.2729"/>
<dbReference type="HOGENOM" id="CLU_036074_0_0_6"/>
<dbReference type="Proteomes" id="UP000001006">
    <property type="component" value="Chromosome"/>
</dbReference>
<dbReference type="Proteomes" id="UP000002673">
    <property type="component" value="Chromosome"/>
</dbReference>
<dbReference type="GO" id="GO:0005886">
    <property type="term" value="C:plasma membrane"/>
    <property type="evidence" value="ECO:0007669"/>
    <property type="project" value="UniProtKB-SubCell"/>
</dbReference>
<dbReference type="GO" id="GO:0046872">
    <property type="term" value="F:metal ion binding"/>
    <property type="evidence" value="ECO:0007669"/>
    <property type="project" value="UniProtKB-KW"/>
</dbReference>
<dbReference type="GO" id="GO:0017004">
    <property type="term" value="P:cytochrome complex assembly"/>
    <property type="evidence" value="ECO:0007669"/>
    <property type="project" value="UniProtKB-KW"/>
</dbReference>
<dbReference type="CDD" id="cd16378">
    <property type="entry name" value="CcmH_N"/>
    <property type="match status" value="1"/>
</dbReference>
<dbReference type="FunFam" id="1.10.8.640:FF:000001">
    <property type="entry name" value="Cytochrome c-type biogenesis protein"/>
    <property type="match status" value="1"/>
</dbReference>
<dbReference type="FunFam" id="1.25.40.10:FF:000156">
    <property type="entry name" value="Cytochrome c-type biogenesis protein"/>
    <property type="match status" value="1"/>
</dbReference>
<dbReference type="Gene3D" id="1.10.8.640">
    <property type="entry name" value="Cytochrome C biogenesis protein"/>
    <property type="match status" value="1"/>
</dbReference>
<dbReference type="Gene3D" id="1.25.40.10">
    <property type="entry name" value="Tetratricopeptide repeat domain"/>
    <property type="match status" value="1"/>
</dbReference>
<dbReference type="InterPro" id="IPR051263">
    <property type="entry name" value="C-type_cytochrome_biogenesis"/>
</dbReference>
<dbReference type="InterPro" id="IPR005616">
    <property type="entry name" value="CcmH/CycL/Ccl2/NrfF_N"/>
</dbReference>
<dbReference type="InterPro" id="IPR038297">
    <property type="entry name" value="CcmH/CycL/NrfF/Ccl2_sf"/>
</dbReference>
<dbReference type="InterPro" id="IPR011990">
    <property type="entry name" value="TPR-like_helical_dom_sf"/>
</dbReference>
<dbReference type="InterPro" id="IPR056413">
    <property type="entry name" value="TPR_CcmH_CycH"/>
</dbReference>
<dbReference type="InterPro" id="IPR019734">
    <property type="entry name" value="TPR_rpt"/>
</dbReference>
<dbReference type="PANTHER" id="PTHR47870">
    <property type="entry name" value="CYTOCHROME C-TYPE BIOGENESIS PROTEIN CCMH"/>
    <property type="match status" value="1"/>
</dbReference>
<dbReference type="PANTHER" id="PTHR47870:SF1">
    <property type="entry name" value="CYTOCHROME C-TYPE BIOGENESIS PROTEIN CCMH"/>
    <property type="match status" value="1"/>
</dbReference>
<dbReference type="Pfam" id="PF03918">
    <property type="entry name" value="CcmH"/>
    <property type="match status" value="1"/>
</dbReference>
<dbReference type="Pfam" id="PF23914">
    <property type="entry name" value="TPR_CcmH_CycH"/>
    <property type="match status" value="1"/>
</dbReference>
<dbReference type="SUPFAM" id="SSF48452">
    <property type="entry name" value="TPR-like"/>
    <property type="match status" value="1"/>
</dbReference>
<dbReference type="PROSITE" id="PS50005">
    <property type="entry name" value="TPR"/>
    <property type="match status" value="2"/>
</dbReference>
<dbReference type="PROSITE" id="PS50293">
    <property type="entry name" value="TPR_REGION"/>
    <property type="match status" value="1"/>
</dbReference>
<protein>
    <recommendedName>
        <fullName>Cytochrome c-type biogenesis protein CcmH</fullName>
    </recommendedName>
</protein>
<proteinExistence type="inferred from homology"/>
<gene>
    <name type="primary">ccmH</name>
    <name type="ordered locus">SF2278</name>
    <name type="ordered locus">S2408</name>
</gene>
<organism>
    <name type="scientific">Shigella flexneri</name>
    <dbReference type="NCBI Taxonomy" id="623"/>
    <lineage>
        <taxon>Bacteria</taxon>
        <taxon>Pseudomonadati</taxon>
        <taxon>Pseudomonadota</taxon>
        <taxon>Gammaproteobacteria</taxon>
        <taxon>Enterobacterales</taxon>
        <taxon>Enterobacteriaceae</taxon>
        <taxon>Shigella</taxon>
    </lineage>
</organism>
<keyword id="KW-0997">Cell inner membrane</keyword>
<keyword id="KW-1003">Cell membrane</keyword>
<keyword id="KW-0201">Cytochrome c-type biogenesis</keyword>
<keyword id="KW-0349">Heme</keyword>
<keyword id="KW-0408">Iron</keyword>
<keyword id="KW-0472">Membrane</keyword>
<keyword id="KW-0479">Metal-binding</keyword>
<keyword id="KW-1185">Reference proteome</keyword>
<keyword id="KW-0677">Repeat</keyword>
<keyword id="KW-0732">Signal</keyword>
<keyword id="KW-0802">TPR repeat</keyword>
<keyword id="KW-0812">Transmembrane</keyword>
<keyword id="KW-1133">Transmembrane helix</keyword>